<keyword id="KW-0067">ATP-binding</keyword>
<keyword id="KW-0143">Chaperone</keyword>
<keyword id="KW-0547">Nucleotide-binding</keyword>
<keyword id="KW-0597">Phosphoprotein</keyword>
<keyword id="KW-0346">Stress response</keyword>
<dbReference type="EMBL" id="AJ006274">
    <property type="protein sequence ID" value="CAA06941.1"/>
    <property type="molecule type" value="Genomic_DNA"/>
</dbReference>
<dbReference type="RefSeq" id="WP_016265325.1">
    <property type="nucleotide sequence ID" value="NZ_VSTE01000001.1"/>
</dbReference>
<dbReference type="SMR" id="O87777"/>
<dbReference type="GeneID" id="57132140"/>
<dbReference type="GO" id="GO:0005524">
    <property type="term" value="F:ATP binding"/>
    <property type="evidence" value="ECO:0007669"/>
    <property type="project" value="UniProtKB-UniRule"/>
</dbReference>
<dbReference type="GO" id="GO:0140662">
    <property type="term" value="F:ATP-dependent protein folding chaperone"/>
    <property type="evidence" value="ECO:0007669"/>
    <property type="project" value="InterPro"/>
</dbReference>
<dbReference type="GO" id="GO:0051082">
    <property type="term" value="F:unfolded protein binding"/>
    <property type="evidence" value="ECO:0007669"/>
    <property type="project" value="InterPro"/>
</dbReference>
<dbReference type="CDD" id="cd10234">
    <property type="entry name" value="ASKHA_NBD_HSP70_DnaK-like"/>
    <property type="match status" value="1"/>
</dbReference>
<dbReference type="FunFam" id="2.60.34.10:FF:000014">
    <property type="entry name" value="Chaperone protein DnaK HSP70"/>
    <property type="match status" value="1"/>
</dbReference>
<dbReference type="FunFam" id="3.30.420.40:FF:000071">
    <property type="entry name" value="Molecular chaperone DnaK"/>
    <property type="match status" value="1"/>
</dbReference>
<dbReference type="FunFam" id="3.90.640.10:FF:000003">
    <property type="entry name" value="Molecular chaperone DnaK"/>
    <property type="match status" value="1"/>
</dbReference>
<dbReference type="Gene3D" id="1.20.1270.10">
    <property type="match status" value="1"/>
</dbReference>
<dbReference type="Gene3D" id="3.30.420.40">
    <property type="match status" value="2"/>
</dbReference>
<dbReference type="Gene3D" id="3.90.640.10">
    <property type="entry name" value="Actin, Chain A, domain 4"/>
    <property type="match status" value="1"/>
</dbReference>
<dbReference type="Gene3D" id="2.60.34.10">
    <property type="entry name" value="Substrate Binding Domain Of DNAk, Chain A, domain 1"/>
    <property type="match status" value="1"/>
</dbReference>
<dbReference type="HAMAP" id="MF_00332">
    <property type="entry name" value="DnaK"/>
    <property type="match status" value="1"/>
</dbReference>
<dbReference type="InterPro" id="IPR043129">
    <property type="entry name" value="ATPase_NBD"/>
</dbReference>
<dbReference type="InterPro" id="IPR012725">
    <property type="entry name" value="Chaperone_DnaK"/>
</dbReference>
<dbReference type="InterPro" id="IPR018181">
    <property type="entry name" value="Heat_shock_70_CS"/>
</dbReference>
<dbReference type="InterPro" id="IPR029048">
    <property type="entry name" value="HSP70_C_sf"/>
</dbReference>
<dbReference type="InterPro" id="IPR029047">
    <property type="entry name" value="HSP70_peptide-bd_sf"/>
</dbReference>
<dbReference type="InterPro" id="IPR013126">
    <property type="entry name" value="Hsp_70_fam"/>
</dbReference>
<dbReference type="NCBIfam" id="NF001413">
    <property type="entry name" value="PRK00290.1"/>
    <property type="match status" value="1"/>
</dbReference>
<dbReference type="NCBIfam" id="TIGR02350">
    <property type="entry name" value="prok_dnaK"/>
    <property type="match status" value="1"/>
</dbReference>
<dbReference type="PANTHER" id="PTHR19375">
    <property type="entry name" value="HEAT SHOCK PROTEIN 70KDA"/>
    <property type="match status" value="1"/>
</dbReference>
<dbReference type="Pfam" id="PF00012">
    <property type="entry name" value="HSP70"/>
    <property type="match status" value="1"/>
</dbReference>
<dbReference type="PRINTS" id="PR00301">
    <property type="entry name" value="HEATSHOCK70"/>
</dbReference>
<dbReference type="SUPFAM" id="SSF53067">
    <property type="entry name" value="Actin-like ATPase domain"/>
    <property type="match status" value="2"/>
</dbReference>
<dbReference type="SUPFAM" id="SSF100934">
    <property type="entry name" value="Heat shock protein 70kD (HSP70), C-terminal subdomain"/>
    <property type="match status" value="1"/>
</dbReference>
<dbReference type="SUPFAM" id="SSF100920">
    <property type="entry name" value="Heat shock protein 70kD (HSP70), peptide-binding domain"/>
    <property type="match status" value="1"/>
</dbReference>
<dbReference type="PROSITE" id="PS00297">
    <property type="entry name" value="HSP70_1"/>
    <property type="match status" value="1"/>
</dbReference>
<dbReference type="PROSITE" id="PS00329">
    <property type="entry name" value="HSP70_2"/>
    <property type="match status" value="1"/>
</dbReference>
<dbReference type="PROSITE" id="PS01036">
    <property type="entry name" value="HSP70_3"/>
    <property type="match status" value="1"/>
</dbReference>
<name>DNAK_LATSK</name>
<reference key="1">
    <citation type="journal article" date="1999" name="Syst. Appl. Microbiol.">
        <title>Molecular characterisation of the dnaK operon of Lactobacillus sakei LTH681.</title>
        <authorList>
            <person name="Schmidt G."/>
            <person name="Hertel C."/>
            <person name="Hammes W.P."/>
        </authorList>
    </citation>
    <scope>NUCLEOTIDE SEQUENCE [GENOMIC DNA]</scope>
    <source>
        <strain>LTH681</strain>
    </source>
</reference>
<organism>
    <name type="scientific">Latilactobacillus sakei</name>
    <name type="common">Lactobacillus sakei</name>
    <dbReference type="NCBI Taxonomy" id="1599"/>
    <lineage>
        <taxon>Bacteria</taxon>
        <taxon>Bacillati</taxon>
        <taxon>Bacillota</taxon>
        <taxon>Bacilli</taxon>
        <taxon>Lactobacillales</taxon>
        <taxon>Lactobacillaceae</taxon>
        <taxon>Latilactobacillus</taxon>
    </lineage>
</organism>
<accession>O87777</accession>
<proteinExistence type="evidence at transcript level"/>
<comment type="function">
    <text evidence="1">Acts as a chaperone.</text>
</comment>
<comment type="induction">
    <text>By heat shock as well as salt or ethanol stress.</text>
</comment>
<comment type="similarity">
    <text evidence="3">Belongs to the heat shock protein 70 family.</text>
</comment>
<protein>
    <recommendedName>
        <fullName>Chaperone protein DnaK</fullName>
    </recommendedName>
    <alternativeName>
        <fullName>HSP70</fullName>
    </alternativeName>
    <alternativeName>
        <fullName>Heat shock 70 kDa protein</fullName>
    </alternativeName>
    <alternativeName>
        <fullName>Heat shock protein 70</fullName>
    </alternativeName>
</protein>
<gene>
    <name type="primary">dnaK</name>
</gene>
<evidence type="ECO:0000250" key="1"/>
<evidence type="ECO:0000256" key="2">
    <source>
        <dbReference type="SAM" id="MobiDB-lite"/>
    </source>
</evidence>
<evidence type="ECO:0000305" key="3"/>
<sequence>MSKVIGIDLGTTNSAVAVLEGGQPKIITNPEGARTTPSVVSFKNGEIQVGEVAKRQAITNPDTIASIKRHIGEAGYKVTVGDKSYTPQEVSAMILQYIKKFAEDYLGEEVTEAVITVPAYFNDSQRQATKDAGKIAGLDVKRIINEPTASALAYGLDKTETDEKVLVYDLGGGTFDVSVLELGDGVFQVLSTNGDTRLGGDDFDEAIMNWLVENFKSDNGIDLSKDKMAMQRLKDAAEKAKKDLSGVSSTQISLPFISAGENGPLHLEMTLSRTEFDRLTSDLVDRTKAPVMNALKDAGLDANEIDKVILNGGSTRIPAVQEAVKNWTGKEPDHSINPDEAVALGAAVQGGVISGDVKDVVLLDVTPLSLGIETMGGVFTKLIDRNTTIPTSKAQTFSTAADNQPAVDIHVLQGERPMAADNKTLGRFQLTDIPAAPRGVPQIEVKFDIDKNGIVNVSAKDLGTNKEQKITIKSNSGLSDEEIDRMMKEAQENEEADTKRKEEVDLKNDVDQLIFQTDKTLKELEGKVSDEELQKAKDAKEELVKAQQENNLEDMKTKRDALSEIVQELTVKLYQQAQEAQQAAGGAEGNATDAKTDDGTVDGDFEEVKDDKE</sequence>
<feature type="chain" id="PRO_0000078476" description="Chaperone protein DnaK">
    <location>
        <begin position="1"/>
        <end position="613"/>
    </location>
</feature>
<feature type="region of interest" description="Disordered" evidence="2">
    <location>
        <begin position="577"/>
        <end position="613"/>
    </location>
</feature>
<feature type="compositionally biased region" description="Acidic residues" evidence="2">
    <location>
        <begin position="599"/>
        <end position="613"/>
    </location>
</feature>
<feature type="modified residue" description="Phosphothreonine; by autocatalysis" evidence="1">
    <location>
        <position position="174"/>
    </location>
</feature>